<name>OFT23_ARATH</name>
<protein>
    <recommendedName>
        <fullName evidence="7">O-fucosyltransferase 23</fullName>
        <shortName evidence="7">O-FucT-23</shortName>
        <ecNumber evidence="7">2.4.1.-</ecNumber>
    </recommendedName>
    <alternativeName>
        <fullName evidence="6">O-fucosyltransferase 1</fullName>
        <shortName evidence="6">AtOFT1</shortName>
    </alternativeName>
    <alternativeName>
        <fullName evidence="7">O-fucosyltransferase family protein</fullName>
    </alternativeName>
</protein>
<evidence type="ECO:0000250" key="1">
    <source>
        <dbReference type="UniProtKB" id="Q9H488"/>
    </source>
</evidence>
<evidence type="ECO:0000250" key="2">
    <source>
        <dbReference type="UniProtKB" id="Q9Y2G5"/>
    </source>
</evidence>
<evidence type="ECO:0000255" key="3">
    <source>
        <dbReference type="PROSITE-ProRule" id="PRU00498"/>
    </source>
</evidence>
<evidence type="ECO:0000269" key="4">
    <source>
    </source>
</evidence>
<evidence type="ECO:0000303" key="5">
    <source>
    </source>
</evidence>
<evidence type="ECO:0000303" key="6">
    <source>
    </source>
</evidence>
<evidence type="ECO:0000305" key="7"/>
<evidence type="ECO:0000312" key="8">
    <source>
        <dbReference type="Araport" id="AT3G05320"/>
    </source>
</evidence>
<evidence type="ECO:0000312" key="9">
    <source>
        <dbReference type="EMBL" id="AAF27038.1"/>
    </source>
</evidence>
<proteinExistence type="evidence at protein level"/>
<sequence>MNSPLSSKNLRIFSKSVACKCLVLVGIALFYRALLLSYSPRNALSNSLLFRDRHMSDSSSTGGIRTDKFLEVPQIVWGLNNQKIAFARACLTARMMNRTLLMPSLSASLFYKEVDKLRPIPFDKVFQFERFNSLCSGFVRLSRFSDVKNRAQVFDLEKGSGRRWTVERDLEHLKQSARNESIDEFEVIRLIGKNPFLWHDHWPVEDYAKVFECMVVVDEISREADKVVMKIREAGEAERAKLASKTEILGPVPFVAVHMRIEIDWMIHCKKLEQRKKISEICSSKREILDRVGNISGLKTPTVLYLAVADTLLEEKEEDSSVLSGWRDGLIPFEKKKLGVKEEIYGKYSYLIQSAIDYEVCLRADVFVGNSFSTFSSLIVLERTQKARRLGFMSSCKDGGNKWRSYAYNLAGESNGVPRRWMTNMTHSSLQAISYGSNSVSCSSG</sequence>
<accession>Q9MA87</accession>
<accession>Q8H0U6</accession>
<dbReference type="EC" id="2.4.1.-" evidence="7"/>
<dbReference type="EMBL" id="KJ138840">
    <property type="protein sequence ID" value="AHL38780.1"/>
    <property type="molecule type" value="mRNA"/>
</dbReference>
<dbReference type="EMBL" id="AC009177">
    <property type="protein sequence ID" value="AAF27038.1"/>
    <property type="molecule type" value="Genomic_DNA"/>
</dbReference>
<dbReference type="EMBL" id="CP002686">
    <property type="protein sequence ID" value="AEE74219.1"/>
    <property type="molecule type" value="Genomic_DNA"/>
</dbReference>
<dbReference type="EMBL" id="CP002686">
    <property type="protein sequence ID" value="ANM65886.1"/>
    <property type="molecule type" value="Genomic_DNA"/>
</dbReference>
<dbReference type="EMBL" id="CP002686">
    <property type="protein sequence ID" value="ANM65887.1"/>
    <property type="molecule type" value="Genomic_DNA"/>
</dbReference>
<dbReference type="EMBL" id="BT002034">
    <property type="protein sequence ID" value="AAN72045.1"/>
    <property type="status" value="ALT_INIT"/>
    <property type="molecule type" value="mRNA"/>
</dbReference>
<dbReference type="EMBL" id="BT015041">
    <property type="protein sequence ID" value="AAT70492.1"/>
    <property type="molecule type" value="mRNA"/>
</dbReference>
<dbReference type="RefSeq" id="NP_001327823.1">
    <property type="nucleotide sequence ID" value="NM_001337577.1"/>
</dbReference>
<dbReference type="RefSeq" id="NP_001327824.1">
    <property type="nucleotide sequence ID" value="NM_001337578.1"/>
</dbReference>
<dbReference type="RefSeq" id="NP_187183.3">
    <property type="nucleotide sequence ID" value="NM_111405.4"/>
</dbReference>
<dbReference type="FunCoup" id="Q9MA87">
    <property type="interactions" value="12"/>
</dbReference>
<dbReference type="STRING" id="3702.Q9MA87"/>
<dbReference type="GlyCosmos" id="Q9MA87">
    <property type="glycosylation" value="4 sites, No reported glycans"/>
</dbReference>
<dbReference type="GlyGen" id="Q9MA87">
    <property type="glycosylation" value="4 sites"/>
</dbReference>
<dbReference type="PaxDb" id="3702-AT3G05320.1"/>
<dbReference type="ProteomicsDB" id="239027"/>
<dbReference type="EnsemblPlants" id="AT3G05320.1">
    <property type="protein sequence ID" value="AT3G05320.1"/>
    <property type="gene ID" value="AT3G05320"/>
</dbReference>
<dbReference type="EnsemblPlants" id="AT3G05320.2">
    <property type="protein sequence ID" value="AT3G05320.2"/>
    <property type="gene ID" value="AT3G05320"/>
</dbReference>
<dbReference type="EnsemblPlants" id="AT3G05320.3">
    <property type="protein sequence ID" value="AT3G05320.3"/>
    <property type="gene ID" value="AT3G05320"/>
</dbReference>
<dbReference type="GeneID" id="819696"/>
<dbReference type="Gramene" id="AT3G05320.1">
    <property type="protein sequence ID" value="AT3G05320.1"/>
    <property type="gene ID" value="AT3G05320"/>
</dbReference>
<dbReference type="Gramene" id="AT3G05320.2">
    <property type="protein sequence ID" value="AT3G05320.2"/>
    <property type="gene ID" value="AT3G05320"/>
</dbReference>
<dbReference type="Gramene" id="AT3G05320.3">
    <property type="protein sequence ID" value="AT3G05320.3"/>
    <property type="gene ID" value="AT3G05320"/>
</dbReference>
<dbReference type="KEGG" id="ath:AT3G05320"/>
<dbReference type="Araport" id="AT3G05320"/>
<dbReference type="TAIR" id="AT3G05320">
    <property type="gene designation" value="OFT1"/>
</dbReference>
<dbReference type="eggNOG" id="ENOG502QST1">
    <property type="taxonomic scope" value="Eukaryota"/>
</dbReference>
<dbReference type="HOGENOM" id="CLU_041881_0_0_1"/>
<dbReference type="InParanoid" id="Q9MA87"/>
<dbReference type="OMA" id="EVPQIAW"/>
<dbReference type="OrthoDB" id="10050276at2759"/>
<dbReference type="PhylomeDB" id="Q9MA87"/>
<dbReference type="BRENDA" id="2.4.1.221">
    <property type="organism ID" value="399"/>
</dbReference>
<dbReference type="PRO" id="PR:Q9MA87"/>
<dbReference type="Proteomes" id="UP000006548">
    <property type="component" value="Chromosome 3"/>
</dbReference>
<dbReference type="ExpressionAtlas" id="Q9MA87">
    <property type="expression patterns" value="baseline and differential"/>
</dbReference>
<dbReference type="GO" id="GO:0000139">
    <property type="term" value="C:Golgi membrane"/>
    <property type="evidence" value="ECO:0007669"/>
    <property type="project" value="UniProtKB-SubCell"/>
</dbReference>
<dbReference type="GO" id="GO:0016757">
    <property type="term" value="F:glycosyltransferase activity"/>
    <property type="evidence" value="ECO:0007669"/>
    <property type="project" value="UniProtKB-KW"/>
</dbReference>
<dbReference type="GO" id="GO:0006004">
    <property type="term" value="P:fucose metabolic process"/>
    <property type="evidence" value="ECO:0007669"/>
    <property type="project" value="UniProtKB-KW"/>
</dbReference>
<dbReference type="GO" id="GO:0009875">
    <property type="term" value="P:pollen-pistil interaction"/>
    <property type="evidence" value="ECO:0007669"/>
    <property type="project" value="InterPro"/>
</dbReference>
<dbReference type="GO" id="GO:0009856">
    <property type="term" value="P:pollination"/>
    <property type="evidence" value="ECO:0000315"/>
    <property type="project" value="TAIR"/>
</dbReference>
<dbReference type="CDD" id="cd11296">
    <property type="entry name" value="O-FucT_like"/>
    <property type="match status" value="1"/>
</dbReference>
<dbReference type="FunFam" id="3.40.50.11350:FF:000017">
    <property type="entry name" value="O-fucosyltransferase 23"/>
    <property type="match status" value="1"/>
</dbReference>
<dbReference type="Gene3D" id="3.40.50.11350">
    <property type="match status" value="1"/>
</dbReference>
<dbReference type="InterPro" id="IPR044982">
    <property type="entry name" value="AtOFT1-like"/>
</dbReference>
<dbReference type="InterPro" id="IPR019378">
    <property type="entry name" value="GDP-Fuc_O-FucTrfase"/>
</dbReference>
<dbReference type="PANTHER" id="PTHR37220">
    <property type="entry name" value="O-FUCOSYLTRANSFERASE 23"/>
    <property type="match status" value="1"/>
</dbReference>
<dbReference type="PANTHER" id="PTHR37220:SF1">
    <property type="entry name" value="O-FUCOSYLTRANSFERASE 23"/>
    <property type="match status" value="1"/>
</dbReference>
<dbReference type="Pfam" id="PF10250">
    <property type="entry name" value="O-FucT"/>
    <property type="match status" value="1"/>
</dbReference>
<keyword id="KW-0119">Carbohydrate metabolism</keyword>
<keyword id="KW-0294">Fucose metabolism</keyword>
<keyword id="KW-0325">Glycoprotein</keyword>
<keyword id="KW-0328">Glycosyltransferase</keyword>
<keyword id="KW-0333">Golgi apparatus</keyword>
<keyword id="KW-0472">Membrane</keyword>
<keyword id="KW-1185">Reference proteome</keyword>
<keyword id="KW-0735">Signal-anchor</keyword>
<keyword id="KW-0808">Transferase</keyword>
<keyword id="KW-0812">Transmembrane</keyword>
<keyword id="KW-1133">Transmembrane helix</keyword>
<feature type="chain" id="PRO_0000442085" description="O-fucosyltransferase 23">
    <location>
        <begin position="1"/>
        <end position="445"/>
    </location>
</feature>
<feature type="transmembrane region" description="Helical; Signal-anchor for type II membrane protein" evidence="7">
    <location>
        <begin position="12"/>
        <end position="34"/>
    </location>
</feature>
<feature type="binding site" evidence="1">
    <location>
        <begin position="258"/>
        <end position="260"/>
    </location>
    <ligand>
        <name>substrate</name>
    </ligand>
</feature>
<feature type="binding site" evidence="2">
    <location>
        <begin position="374"/>
        <end position="375"/>
    </location>
    <ligand>
        <name>substrate</name>
    </ligand>
</feature>
<feature type="glycosylation site" description="N-linked (GlcNAc...) asparagine" evidence="3">
    <location>
        <position position="97"/>
    </location>
</feature>
<feature type="glycosylation site" description="N-linked (GlcNAc...) asparagine" evidence="3">
    <location>
        <position position="179"/>
    </location>
</feature>
<feature type="glycosylation site" description="N-linked (GlcNAc...) asparagine" evidence="3">
    <location>
        <position position="294"/>
    </location>
</feature>
<feature type="glycosylation site" description="N-linked (GlcNAc...) asparagine" evidence="3">
    <location>
        <position position="424"/>
    </location>
</feature>
<feature type="mutagenesis site" description="Unable to complement the mutant reduced seed set phenotype." evidence="4">
    <original>R</original>
    <variation>A</variation>
    <location>
        <position position="51"/>
    </location>
</feature>
<feature type="mutagenesis site" description="Unable to complement the mutant reduced seed set phenotype." evidence="4">
    <original>H</original>
    <variation>A</variation>
    <location>
        <position position="54"/>
    </location>
</feature>
<feature type="mutagenesis site" description="Complements the mutant reduced seed set phenotype." evidence="4">
    <original>H</original>
    <variation>N</variation>
    <location>
        <position position="54"/>
    </location>
</feature>
<feature type="mutagenesis site" description="Unable to complement the mutant reduced seed set phenotype." evidence="4">
    <original>R</original>
    <variation>A</variation>
    <variation>K</variation>
    <location>
        <position position="260"/>
    </location>
</feature>
<feature type="mutagenesis site" description="Unable to complement the mutant reduced seed set phenotype." evidence="4">
    <original>D</original>
    <variation>A</variation>
    <location>
        <position position="264"/>
    </location>
</feature>
<gene>
    <name evidence="7" type="primary">OFUT23</name>
    <name evidence="5" type="synonym">GT65</name>
    <name evidence="6" type="synonym">OFT1</name>
    <name evidence="8" type="ordered locus">At3g05320</name>
    <name evidence="9" type="ORF">T12H1.29</name>
</gene>
<reference key="1">
    <citation type="journal article" date="2014" name="Plant J.">
        <title>The plant glycosyltransferase clone collection for functional genomics.</title>
        <authorList>
            <person name="Lao J."/>
            <person name="Oikawa A."/>
            <person name="Bromley J.R."/>
            <person name="McInerney P."/>
            <person name="Suttangkakul A."/>
            <person name="Smith-Moritz A.M."/>
            <person name="Plahar H."/>
            <person name="Chiu T.-Y."/>
            <person name="Gonzalez Fernandez-Nino S.M.G."/>
            <person name="Ebert B."/>
            <person name="Yang F."/>
            <person name="Christiansen K.M."/>
            <person name="Hansen S.F."/>
            <person name="Stonebloom S."/>
            <person name="Adams P.D."/>
            <person name="Ronald P.C."/>
            <person name="Hillson N.J."/>
            <person name="Hadi M.Z."/>
            <person name="Vega-Sanchez M.E."/>
            <person name="Loque D."/>
            <person name="Scheller H.V."/>
            <person name="Heazlewood J.L."/>
        </authorList>
    </citation>
    <scope>NUCLEOTIDE SEQUENCE [MRNA]</scope>
    <scope>WEB RESOURCE</scope>
    <source>
        <strain>cv. Columbia</strain>
    </source>
</reference>
<reference key="2">
    <citation type="journal article" date="2000" name="Nature">
        <title>Sequence and analysis of chromosome 3 of the plant Arabidopsis thaliana.</title>
        <authorList>
            <person name="Salanoubat M."/>
            <person name="Lemcke K."/>
            <person name="Rieger M."/>
            <person name="Ansorge W."/>
            <person name="Unseld M."/>
            <person name="Fartmann B."/>
            <person name="Valle G."/>
            <person name="Bloecker H."/>
            <person name="Perez-Alonso M."/>
            <person name="Obermaier B."/>
            <person name="Delseny M."/>
            <person name="Boutry M."/>
            <person name="Grivell L.A."/>
            <person name="Mache R."/>
            <person name="Puigdomenech P."/>
            <person name="De Simone V."/>
            <person name="Choisne N."/>
            <person name="Artiguenave F."/>
            <person name="Robert C."/>
            <person name="Brottier P."/>
            <person name="Wincker P."/>
            <person name="Cattolico L."/>
            <person name="Weissenbach J."/>
            <person name="Saurin W."/>
            <person name="Quetier F."/>
            <person name="Schaefer M."/>
            <person name="Mueller-Auer S."/>
            <person name="Gabel C."/>
            <person name="Fuchs M."/>
            <person name="Benes V."/>
            <person name="Wurmbach E."/>
            <person name="Drzonek H."/>
            <person name="Erfle H."/>
            <person name="Jordan N."/>
            <person name="Bangert S."/>
            <person name="Wiedelmann R."/>
            <person name="Kranz H."/>
            <person name="Voss H."/>
            <person name="Holland R."/>
            <person name="Brandt P."/>
            <person name="Nyakatura G."/>
            <person name="Vezzi A."/>
            <person name="D'Angelo M."/>
            <person name="Pallavicini A."/>
            <person name="Toppo S."/>
            <person name="Simionati B."/>
            <person name="Conrad A."/>
            <person name="Hornischer K."/>
            <person name="Kauer G."/>
            <person name="Loehnert T.-H."/>
            <person name="Nordsiek G."/>
            <person name="Reichelt J."/>
            <person name="Scharfe M."/>
            <person name="Schoen O."/>
            <person name="Bargues M."/>
            <person name="Terol J."/>
            <person name="Climent J."/>
            <person name="Navarro P."/>
            <person name="Collado C."/>
            <person name="Perez-Perez A."/>
            <person name="Ottenwaelder B."/>
            <person name="Duchemin D."/>
            <person name="Cooke R."/>
            <person name="Laudie M."/>
            <person name="Berger-Llauro C."/>
            <person name="Purnelle B."/>
            <person name="Masuy D."/>
            <person name="de Haan M."/>
            <person name="Maarse A.C."/>
            <person name="Alcaraz J.-P."/>
            <person name="Cottet A."/>
            <person name="Casacuberta E."/>
            <person name="Monfort A."/>
            <person name="Argiriou A."/>
            <person name="Flores M."/>
            <person name="Liguori R."/>
            <person name="Vitale D."/>
            <person name="Mannhaupt G."/>
            <person name="Haase D."/>
            <person name="Schoof H."/>
            <person name="Rudd S."/>
            <person name="Zaccaria P."/>
            <person name="Mewes H.-W."/>
            <person name="Mayer K.F.X."/>
            <person name="Kaul S."/>
            <person name="Town C.D."/>
            <person name="Koo H.L."/>
            <person name="Tallon L.J."/>
            <person name="Jenkins J."/>
            <person name="Rooney T."/>
            <person name="Rizzo M."/>
            <person name="Walts A."/>
            <person name="Utterback T."/>
            <person name="Fujii C.Y."/>
            <person name="Shea T.P."/>
            <person name="Creasy T.H."/>
            <person name="Haas B."/>
            <person name="Maiti R."/>
            <person name="Wu D."/>
            <person name="Peterson J."/>
            <person name="Van Aken S."/>
            <person name="Pai G."/>
            <person name="Militscher J."/>
            <person name="Sellers P."/>
            <person name="Gill J.E."/>
            <person name="Feldblyum T.V."/>
            <person name="Preuss D."/>
            <person name="Lin X."/>
            <person name="Nierman W.C."/>
            <person name="Salzberg S.L."/>
            <person name="White O."/>
            <person name="Venter J.C."/>
            <person name="Fraser C.M."/>
            <person name="Kaneko T."/>
            <person name="Nakamura Y."/>
            <person name="Sato S."/>
            <person name="Kato T."/>
            <person name="Asamizu E."/>
            <person name="Sasamoto S."/>
            <person name="Kimura T."/>
            <person name="Idesawa K."/>
            <person name="Kawashima K."/>
            <person name="Kishida Y."/>
            <person name="Kiyokawa C."/>
            <person name="Kohara M."/>
            <person name="Matsumoto M."/>
            <person name="Matsuno A."/>
            <person name="Muraki A."/>
            <person name="Nakayama S."/>
            <person name="Nakazaki N."/>
            <person name="Shinpo S."/>
            <person name="Takeuchi C."/>
            <person name="Wada T."/>
            <person name="Watanabe A."/>
            <person name="Yamada M."/>
            <person name="Yasuda M."/>
            <person name="Tabata S."/>
        </authorList>
    </citation>
    <scope>NUCLEOTIDE SEQUENCE [LARGE SCALE GENOMIC DNA]</scope>
    <source>
        <strain>cv. Columbia</strain>
    </source>
</reference>
<reference key="3">
    <citation type="journal article" date="2017" name="Plant J.">
        <title>Araport11: a complete reannotation of the Arabidopsis thaliana reference genome.</title>
        <authorList>
            <person name="Cheng C.Y."/>
            <person name="Krishnakumar V."/>
            <person name="Chan A.P."/>
            <person name="Thibaud-Nissen F."/>
            <person name="Schobel S."/>
            <person name="Town C.D."/>
        </authorList>
    </citation>
    <scope>GENOME REANNOTATION</scope>
    <source>
        <strain>cv. Columbia</strain>
    </source>
</reference>
<reference key="4">
    <citation type="journal article" date="2003" name="Science">
        <title>Empirical analysis of transcriptional activity in the Arabidopsis genome.</title>
        <authorList>
            <person name="Yamada K."/>
            <person name="Lim J."/>
            <person name="Dale J.M."/>
            <person name="Chen H."/>
            <person name="Shinn P."/>
            <person name="Palm C.J."/>
            <person name="Southwick A.M."/>
            <person name="Wu H.C."/>
            <person name="Kim C.J."/>
            <person name="Nguyen M."/>
            <person name="Pham P.K."/>
            <person name="Cheuk R.F."/>
            <person name="Karlin-Newmann G."/>
            <person name="Liu S.X."/>
            <person name="Lam B."/>
            <person name="Sakano H."/>
            <person name="Wu T."/>
            <person name="Yu G."/>
            <person name="Miranda M."/>
            <person name="Quach H.L."/>
            <person name="Tripp M."/>
            <person name="Chang C.H."/>
            <person name="Lee J.M."/>
            <person name="Toriumi M.J."/>
            <person name="Chan M.M."/>
            <person name="Tang C.C."/>
            <person name="Onodera C.S."/>
            <person name="Deng J.M."/>
            <person name="Akiyama K."/>
            <person name="Ansari Y."/>
            <person name="Arakawa T."/>
            <person name="Banh J."/>
            <person name="Banno F."/>
            <person name="Bowser L."/>
            <person name="Brooks S.Y."/>
            <person name="Carninci P."/>
            <person name="Chao Q."/>
            <person name="Choy N."/>
            <person name="Enju A."/>
            <person name="Goldsmith A.D."/>
            <person name="Gurjal M."/>
            <person name="Hansen N.F."/>
            <person name="Hayashizaki Y."/>
            <person name="Johnson-Hopson C."/>
            <person name="Hsuan V.W."/>
            <person name="Iida K."/>
            <person name="Karnes M."/>
            <person name="Khan S."/>
            <person name="Koesema E."/>
            <person name="Ishida J."/>
            <person name="Jiang P.X."/>
            <person name="Jones T."/>
            <person name="Kawai J."/>
            <person name="Kamiya A."/>
            <person name="Meyers C."/>
            <person name="Nakajima M."/>
            <person name="Narusaka M."/>
            <person name="Seki M."/>
            <person name="Sakurai T."/>
            <person name="Satou M."/>
            <person name="Tamse R."/>
            <person name="Vaysberg M."/>
            <person name="Wallender E.K."/>
            <person name="Wong C."/>
            <person name="Yamamura Y."/>
            <person name="Yuan S."/>
            <person name="Shinozaki K."/>
            <person name="Davis R.W."/>
            <person name="Theologis A."/>
            <person name="Ecker J.R."/>
        </authorList>
    </citation>
    <scope>NUCLEOTIDE SEQUENCE [LARGE SCALE MRNA] OF 72-445</scope>
    <source>
        <strain>cv. Columbia</strain>
    </source>
</reference>
<reference key="5">
    <citation type="journal article" date="2012" name="Front. Plant Sci.">
        <title>Plant glycosyltransferases beyond CAZy: a perspective on DUF families.</title>
        <authorList>
            <person name="Hansen S.F."/>
            <person name="Harholt J."/>
            <person name="Oikawa A."/>
            <person name="Scheller H.V."/>
        </authorList>
    </citation>
    <scope>GENE FAMILY</scope>
    <scope>REVIEW</scope>
</reference>
<reference key="6">
    <citation type="journal article" date="2012" name="PLoS ONE">
        <title>Identification of putative rhamnogalacturonan-II specific glycosyltransferases in Arabidopsis using a combination of bioinformatics approaches.</title>
        <authorList>
            <person name="Voxeur A."/>
            <person name="Andre A."/>
            <person name="Breton C."/>
            <person name="Lerouge P."/>
        </authorList>
    </citation>
    <scope>GENE FAMILY</scope>
</reference>
<reference key="7">
    <citation type="journal article" date="2013" name="Plant J.">
        <title>Identification of an additional protein involved in mannan biosynthesis.</title>
        <authorList>
            <person name="Wang Y."/>
            <person name="Mortimer J.C."/>
            <person name="Davis J."/>
            <person name="Dupree P."/>
            <person name="Keegstra K."/>
        </authorList>
    </citation>
    <scope>GENE FAMILY</scope>
</reference>
<reference key="8">
    <citation type="journal article" date="2018" name="Plant Physiol.">
        <title>A putative protein O-fucosyltransferase facilitates pollen tube penetration through the stigma-style interface.</title>
        <authorList>
            <person name="Smith D.K."/>
            <person name="Jones D.M."/>
            <person name="Lau J.B.R."/>
            <person name="Cruz E.R."/>
            <person name="Brown E."/>
            <person name="Harper J.F."/>
            <person name="Wallace I.S."/>
        </authorList>
    </citation>
    <scope>FUNCTION</scope>
    <scope>SUBCELLULAR LOCATION</scope>
    <scope>TISSUE SPECIFICITY</scope>
    <scope>DISRUPTION PHENOTYPE</scope>
    <scope>MUTAGENESIS OF ARG-51; HIS-54; ARG-260 AND ASP-264</scope>
</reference>
<comment type="function">
    <text evidence="4">Probable protein O-fucosyltransferase required for correct pollen tube penetration through the stigma-style interface (PubMed:29467178). May be involved in protein O-glycosylation events during pollen-pistil interactions (PubMed:29467178).</text>
</comment>
<comment type="pathway">
    <text evidence="7">Glycan metabolism.</text>
</comment>
<comment type="subcellular location">
    <subcellularLocation>
        <location evidence="4">Golgi apparatus membrane</location>
        <topology evidence="7">Single-pass type II membrane protein</topology>
    </subcellularLocation>
</comment>
<comment type="tissue specificity">
    <text evidence="4">Expressed in dry pollen grains and germinating pollen grains.</text>
</comment>
<comment type="disruption phenotype">
    <text evidence="4">Altered silique morphology and reduced seed set.</text>
</comment>
<comment type="similarity">
    <text evidence="7">Belongs to the glycosyltransferase GT106 family.</text>
</comment>
<comment type="sequence caution" evidence="7">
    <conflict type="erroneous initiation">
        <sequence resource="EMBL-CDS" id="AAN72045"/>
    </conflict>
    <text>Truncated N-terminus.</text>
</comment>
<organism>
    <name type="scientific">Arabidopsis thaliana</name>
    <name type="common">Mouse-ear cress</name>
    <dbReference type="NCBI Taxonomy" id="3702"/>
    <lineage>
        <taxon>Eukaryota</taxon>
        <taxon>Viridiplantae</taxon>
        <taxon>Streptophyta</taxon>
        <taxon>Embryophyta</taxon>
        <taxon>Tracheophyta</taxon>
        <taxon>Spermatophyta</taxon>
        <taxon>Magnoliopsida</taxon>
        <taxon>eudicotyledons</taxon>
        <taxon>Gunneridae</taxon>
        <taxon>Pentapetalae</taxon>
        <taxon>rosids</taxon>
        <taxon>malvids</taxon>
        <taxon>Brassicales</taxon>
        <taxon>Brassicaceae</taxon>
        <taxon>Camelineae</taxon>
        <taxon>Arabidopsis</taxon>
    </lineage>
</organism>